<proteinExistence type="inferred from homology"/>
<keyword id="KW-0046">Antibiotic resistance</keyword>
<keyword id="KW-0997">Cell inner membrane</keyword>
<keyword id="KW-1003">Cell membrane</keyword>
<keyword id="KW-0328">Glycosyltransferase</keyword>
<keyword id="KW-0441">Lipid A biosynthesis</keyword>
<keyword id="KW-0444">Lipid biosynthesis</keyword>
<keyword id="KW-0443">Lipid metabolism</keyword>
<keyword id="KW-0448">Lipopolysaccharide biosynthesis</keyword>
<keyword id="KW-0472">Membrane</keyword>
<keyword id="KW-0808">Transferase</keyword>
<keyword id="KW-0812">Transmembrane</keyword>
<keyword id="KW-1133">Transmembrane helix</keyword>
<evidence type="ECO:0000255" key="1">
    <source>
        <dbReference type="HAMAP-Rule" id="MF_01164"/>
    </source>
</evidence>
<reference key="1">
    <citation type="submission" date="2008-02" db="EMBL/GenBank/DDBJ databases">
        <title>Complete sequence of Yersinia pseudotuberculosis YPIII.</title>
        <authorList>
            <consortium name="US DOE Joint Genome Institute"/>
            <person name="Copeland A."/>
            <person name="Lucas S."/>
            <person name="Lapidus A."/>
            <person name="Glavina del Rio T."/>
            <person name="Dalin E."/>
            <person name="Tice H."/>
            <person name="Bruce D."/>
            <person name="Goodwin L."/>
            <person name="Pitluck S."/>
            <person name="Munk A.C."/>
            <person name="Brettin T."/>
            <person name="Detter J.C."/>
            <person name="Han C."/>
            <person name="Tapia R."/>
            <person name="Schmutz J."/>
            <person name="Larimer F."/>
            <person name="Land M."/>
            <person name="Hauser L."/>
            <person name="Challacombe J.F."/>
            <person name="Green L."/>
            <person name="Lindler L.E."/>
            <person name="Nikolich M.P."/>
            <person name="Richardson P."/>
        </authorList>
    </citation>
    <scope>NUCLEOTIDE SEQUENCE [LARGE SCALE GENOMIC DNA]</scope>
    <source>
        <strain>YPIII</strain>
    </source>
</reference>
<sequence length="327" mass="36433">MSLNEPIKKVSIVIPVYNEQESLPALIDRTTAACKLLTQAYEIILVDDGSSDNSTELLTAAANDPDSHIIAILLNRNYGQHSAIMAGFNQVSGDLIITLDADLQNPPEEIPRLVHVAEEGYDVVGTVRANRQDSLFRKTASRMINMMIQRATGKSMGDYGCMLRAYRRHIVEAMLHCHERSTFIPILANTFARRTTEITVHHAEREFGNSKYSLMRLINLMYDLITCLTTTPLRLLSLVGSAIALLGFTFSVLLVALRLIFGPEWAGGGVFTLFAVLFMFIGAQFVGMGLLGEYIGRIYNDVRARPRYFVQKVVGAEQTENNQDVEK</sequence>
<name>ARNC_YERPY</name>
<organism>
    <name type="scientific">Yersinia pseudotuberculosis serotype O:3 (strain YPIII)</name>
    <dbReference type="NCBI Taxonomy" id="502800"/>
    <lineage>
        <taxon>Bacteria</taxon>
        <taxon>Pseudomonadati</taxon>
        <taxon>Pseudomonadota</taxon>
        <taxon>Gammaproteobacteria</taxon>
        <taxon>Enterobacterales</taxon>
        <taxon>Yersiniaceae</taxon>
        <taxon>Yersinia</taxon>
    </lineage>
</organism>
<gene>
    <name evidence="1" type="primary">arnC</name>
    <name type="ordered locus">YPK_1832</name>
</gene>
<accession>B1JJ29</accession>
<feature type="chain" id="PRO_1000137927" description="Undecaprenyl-phosphate 4-deoxy-4-formamido-L-arabinose transferase">
    <location>
        <begin position="1"/>
        <end position="327"/>
    </location>
</feature>
<feature type="transmembrane region" description="Helical" evidence="1">
    <location>
        <begin position="235"/>
        <end position="255"/>
    </location>
</feature>
<feature type="transmembrane region" description="Helical" evidence="1">
    <location>
        <begin position="270"/>
        <end position="290"/>
    </location>
</feature>
<dbReference type="EC" id="2.4.2.53" evidence="1"/>
<dbReference type="EMBL" id="CP000950">
    <property type="protein sequence ID" value="ACA68123.1"/>
    <property type="molecule type" value="Genomic_DNA"/>
</dbReference>
<dbReference type="RefSeq" id="WP_011192543.1">
    <property type="nucleotide sequence ID" value="NZ_CP009792.1"/>
</dbReference>
<dbReference type="SMR" id="B1JJ29"/>
<dbReference type="CAZy" id="GT2">
    <property type="family name" value="Glycosyltransferase Family 2"/>
</dbReference>
<dbReference type="GeneID" id="49785666"/>
<dbReference type="KEGG" id="ypy:YPK_1832"/>
<dbReference type="PATRIC" id="fig|502800.11.peg.2501"/>
<dbReference type="UniPathway" id="UPA00030"/>
<dbReference type="UniPathway" id="UPA00036">
    <property type="reaction ID" value="UER00495"/>
</dbReference>
<dbReference type="GO" id="GO:0005886">
    <property type="term" value="C:plasma membrane"/>
    <property type="evidence" value="ECO:0007669"/>
    <property type="project" value="UniProtKB-SubCell"/>
</dbReference>
<dbReference type="GO" id="GO:0016780">
    <property type="term" value="F:phosphotransferase activity, for other substituted phosphate groups"/>
    <property type="evidence" value="ECO:0007669"/>
    <property type="project" value="UniProtKB-UniRule"/>
</dbReference>
<dbReference type="GO" id="GO:0099621">
    <property type="term" value="F:undecaprenyl-phosphate 4-deoxy-4-formamido-L-arabinose transferase activity"/>
    <property type="evidence" value="ECO:0007669"/>
    <property type="project" value="UniProtKB-EC"/>
</dbReference>
<dbReference type="GO" id="GO:0036108">
    <property type="term" value="P:4-amino-4-deoxy-alpha-L-arabinopyranosyl undecaprenyl phosphate biosynthetic process"/>
    <property type="evidence" value="ECO:0007669"/>
    <property type="project" value="UniProtKB-UniRule"/>
</dbReference>
<dbReference type="GO" id="GO:0009245">
    <property type="term" value="P:lipid A biosynthetic process"/>
    <property type="evidence" value="ECO:0007669"/>
    <property type="project" value="UniProtKB-UniRule"/>
</dbReference>
<dbReference type="GO" id="GO:0009103">
    <property type="term" value="P:lipopolysaccharide biosynthetic process"/>
    <property type="evidence" value="ECO:0007669"/>
    <property type="project" value="UniProtKB-UniRule"/>
</dbReference>
<dbReference type="GO" id="GO:0046677">
    <property type="term" value="P:response to antibiotic"/>
    <property type="evidence" value="ECO:0007669"/>
    <property type="project" value="UniProtKB-KW"/>
</dbReference>
<dbReference type="CDD" id="cd04187">
    <property type="entry name" value="DPM1_like_bac"/>
    <property type="match status" value="1"/>
</dbReference>
<dbReference type="FunFam" id="3.90.550.10:FF:000019">
    <property type="entry name" value="Undecaprenyl-phosphate 4-deoxy-4-formamido-L-arabinose transferase"/>
    <property type="match status" value="1"/>
</dbReference>
<dbReference type="Gene3D" id="3.90.550.10">
    <property type="entry name" value="Spore Coat Polysaccharide Biosynthesis Protein SpsA, Chain A"/>
    <property type="match status" value="1"/>
</dbReference>
<dbReference type="HAMAP" id="MF_01164">
    <property type="entry name" value="ArnC_transfer"/>
    <property type="match status" value="1"/>
</dbReference>
<dbReference type="InterPro" id="IPR022857">
    <property type="entry name" value="ArnC_tfrase"/>
</dbReference>
<dbReference type="InterPro" id="IPR001173">
    <property type="entry name" value="Glyco_trans_2-like"/>
</dbReference>
<dbReference type="InterPro" id="IPR050256">
    <property type="entry name" value="Glycosyltransferase_2"/>
</dbReference>
<dbReference type="InterPro" id="IPR029044">
    <property type="entry name" value="Nucleotide-diphossugar_trans"/>
</dbReference>
<dbReference type="NCBIfam" id="NF007986">
    <property type="entry name" value="PRK10714.1"/>
    <property type="match status" value="1"/>
</dbReference>
<dbReference type="PANTHER" id="PTHR48090:SF3">
    <property type="entry name" value="UNDECAPRENYL-PHOSPHATE 4-DEOXY-4-FORMAMIDO-L-ARABINOSE TRANSFERASE"/>
    <property type="match status" value="1"/>
</dbReference>
<dbReference type="PANTHER" id="PTHR48090">
    <property type="entry name" value="UNDECAPRENYL-PHOSPHATE 4-DEOXY-4-FORMAMIDO-L-ARABINOSE TRANSFERASE-RELATED"/>
    <property type="match status" value="1"/>
</dbReference>
<dbReference type="Pfam" id="PF00535">
    <property type="entry name" value="Glycos_transf_2"/>
    <property type="match status" value="1"/>
</dbReference>
<dbReference type="SUPFAM" id="SSF53448">
    <property type="entry name" value="Nucleotide-diphospho-sugar transferases"/>
    <property type="match status" value="1"/>
</dbReference>
<comment type="function">
    <text evidence="1">Catalyzes the transfer of 4-deoxy-4-formamido-L-arabinose from UDP to undecaprenyl phosphate. The modified arabinose is attached to lipid A and is required for resistance to polymyxin and cationic antimicrobial peptides.</text>
</comment>
<comment type="catalytic activity">
    <reaction evidence="1">
        <text>UDP-4-deoxy-4-formamido-beta-L-arabinose + di-trans,octa-cis-undecaprenyl phosphate = 4-deoxy-4-formamido-alpha-L-arabinopyranosyl di-trans,octa-cis-undecaprenyl phosphate + UDP</text>
        <dbReference type="Rhea" id="RHEA:27722"/>
        <dbReference type="ChEBI" id="CHEBI:58223"/>
        <dbReference type="ChEBI" id="CHEBI:58709"/>
        <dbReference type="ChEBI" id="CHEBI:58909"/>
        <dbReference type="ChEBI" id="CHEBI:60392"/>
        <dbReference type="EC" id="2.4.2.53"/>
    </reaction>
</comment>
<comment type="pathway">
    <text evidence="1">Glycolipid biosynthesis; 4-amino-4-deoxy-alpha-L-arabinose undecaprenyl phosphate biosynthesis; 4-amino-4-deoxy-alpha-L-arabinose undecaprenyl phosphate from UDP-4-deoxy-4-formamido-beta-L-arabinose and undecaprenyl phosphate: step 1/2.</text>
</comment>
<comment type="pathway">
    <text evidence="1">Bacterial outer membrane biogenesis; lipopolysaccharide biosynthesis.</text>
</comment>
<comment type="subcellular location">
    <subcellularLocation>
        <location evidence="1">Cell inner membrane</location>
        <topology evidence="1">Multi-pass membrane protein</topology>
    </subcellularLocation>
</comment>
<comment type="similarity">
    <text evidence="1">Belongs to the glycosyltransferase 2 family.</text>
</comment>
<protein>
    <recommendedName>
        <fullName evidence="1">Undecaprenyl-phosphate 4-deoxy-4-formamido-L-arabinose transferase</fullName>
        <ecNumber evidence="1">2.4.2.53</ecNumber>
    </recommendedName>
    <alternativeName>
        <fullName evidence="1">Undecaprenyl-phosphate Ara4FN transferase</fullName>
        <shortName evidence="1">Ara4FN transferase</shortName>
    </alternativeName>
</protein>